<name>FENR_METS5</name>
<evidence type="ECO:0000255" key="1">
    <source>
        <dbReference type="HAMAP-Rule" id="MF_01685"/>
    </source>
</evidence>
<evidence type="ECO:0000305" key="2"/>
<reference key="1">
    <citation type="journal article" date="2008" name="Appl. Environ. Microbiol.">
        <title>The genome sequence of the metal-mobilizing, extremely thermoacidophilic archaeon Metallosphaera sedula provides insights into bioleaching-associated metabolism.</title>
        <authorList>
            <person name="Auernik K.S."/>
            <person name="Maezato Y."/>
            <person name="Blum P.H."/>
            <person name="Kelly R.M."/>
        </authorList>
    </citation>
    <scope>NUCLEOTIDE SEQUENCE [LARGE SCALE GENOMIC DNA]</scope>
    <source>
        <strain>ATCC 51363 / DSM 5348 / JCM 9185 / NBRC 15509 / TH2</strain>
    </source>
</reference>
<gene>
    <name type="ordered locus">Msed_0743</name>
</gene>
<sequence>MAEYEVIVIGGGPVGLFGTFYSGLRDMKVLLIDSQDELGGQLVTLYPEKMVYDVGGFAGIQAYDLAQRLIEQAKMFGPDIRTREWADTLEKTQDGMWVVKTDKGGEYKTKTVMIAAGIGKITPSRLGAKGEVEYENKGVYYTVRRKSEFQGKRVLIVGGGDSAVDWALTLAPIAKEVTLIHRRDQFRAHERSVKEMFEVAKVYTWHELKEVKGDGNRVTQAIIFDNRTKEEKTLNVDAVIISIGHKGDLGNMLKWGLNMKGRDIVVNGKMETNLPGVYAVGDIASVEGMPKLALIAVGFGQAAIASSVAKKYVDPNASVFAGHSSEMDKFKK</sequence>
<dbReference type="EC" id="1.18.1.2" evidence="1"/>
<dbReference type="EMBL" id="CP000682">
    <property type="protein sequence ID" value="ABP94918.1"/>
    <property type="status" value="ALT_INIT"/>
    <property type="molecule type" value="Genomic_DNA"/>
</dbReference>
<dbReference type="RefSeq" id="WP_048060262.1">
    <property type="nucleotide sequence ID" value="NC_009440.1"/>
</dbReference>
<dbReference type="SMR" id="A4YER6"/>
<dbReference type="STRING" id="399549.Msed_0743"/>
<dbReference type="GeneID" id="91755197"/>
<dbReference type="KEGG" id="mse:Msed_0743"/>
<dbReference type="eggNOG" id="arCOG01296">
    <property type="taxonomic scope" value="Archaea"/>
</dbReference>
<dbReference type="HOGENOM" id="CLU_031864_5_5_2"/>
<dbReference type="Proteomes" id="UP000000242">
    <property type="component" value="Chromosome"/>
</dbReference>
<dbReference type="GO" id="GO:0004324">
    <property type="term" value="F:ferredoxin-NADP+ reductase activity"/>
    <property type="evidence" value="ECO:0007669"/>
    <property type="project" value="UniProtKB-UniRule"/>
</dbReference>
<dbReference type="GO" id="GO:0050660">
    <property type="term" value="F:flavin adenine dinucleotide binding"/>
    <property type="evidence" value="ECO:0007669"/>
    <property type="project" value="UniProtKB-UniRule"/>
</dbReference>
<dbReference type="GO" id="GO:0050661">
    <property type="term" value="F:NADP binding"/>
    <property type="evidence" value="ECO:0007669"/>
    <property type="project" value="UniProtKB-UniRule"/>
</dbReference>
<dbReference type="Gene3D" id="3.50.50.60">
    <property type="entry name" value="FAD/NAD(P)-binding domain"/>
    <property type="match status" value="2"/>
</dbReference>
<dbReference type="HAMAP" id="MF_01685">
    <property type="entry name" value="FENR2"/>
    <property type="match status" value="1"/>
</dbReference>
<dbReference type="InterPro" id="IPR036188">
    <property type="entry name" value="FAD/NAD-bd_sf"/>
</dbReference>
<dbReference type="InterPro" id="IPR023753">
    <property type="entry name" value="FAD/NAD-binding_dom"/>
</dbReference>
<dbReference type="InterPro" id="IPR022890">
    <property type="entry name" value="Fd--NADP_Rdtase_type_2"/>
</dbReference>
<dbReference type="InterPro" id="IPR050097">
    <property type="entry name" value="Ferredoxin-NADP_redctase_2"/>
</dbReference>
<dbReference type="PANTHER" id="PTHR48105">
    <property type="entry name" value="THIOREDOXIN REDUCTASE 1-RELATED-RELATED"/>
    <property type="match status" value="1"/>
</dbReference>
<dbReference type="Pfam" id="PF07992">
    <property type="entry name" value="Pyr_redox_2"/>
    <property type="match status" value="1"/>
</dbReference>
<dbReference type="PRINTS" id="PR00368">
    <property type="entry name" value="FADPNR"/>
</dbReference>
<dbReference type="PRINTS" id="PR00469">
    <property type="entry name" value="PNDRDTASEII"/>
</dbReference>
<dbReference type="SUPFAM" id="SSF51905">
    <property type="entry name" value="FAD/NAD(P)-binding domain"/>
    <property type="match status" value="1"/>
</dbReference>
<keyword id="KW-0274">FAD</keyword>
<keyword id="KW-0285">Flavoprotein</keyword>
<keyword id="KW-0521">NADP</keyword>
<keyword id="KW-0560">Oxidoreductase</keyword>
<keyword id="KW-1185">Reference proteome</keyword>
<protein>
    <recommendedName>
        <fullName evidence="1">Ferredoxin--NADP reductase</fullName>
        <shortName evidence="1">FNR</shortName>
        <shortName evidence="1">Fd-NADP(+) reductase</shortName>
        <ecNumber evidence="1">1.18.1.2</ecNumber>
    </recommendedName>
</protein>
<accession>A4YER6</accession>
<proteinExistence type="inferred from homology"/>
<organism>
    <name type="scientific">Metallosphaera sedula (strain ATCC 51363 / DSM 5348 / JCM 9185 / NBRC 15509 / TH2)</name>
    <dbReference type="NCBI Taxonomy" id="399549"/>
    <lineage>
        <taxon>Archaea</taxon>
        <taxon>Thermoproteota</taxon>
        <taxon>Thermoprotei</taxon>
        <taxon>Sulfolobales</taxon>
        <taxon>Sulfolobaceae</taxon>
        <taxon>Metallosphaera</taxon>
    </lineage>
</organism>
<feature type="chain" id="PRO_0000364987" description="Ferredoxin--NADP reductase">
    <location>
        <begin position="1"/>
        <end position="332"/>
    </location>
</feature>
<feature type="binding site" evidence="1">
    <location>
        <position position="33"/>
    </location>
    <ligand>
        <name>FAD</name>
        <dbReference type="ChEBI" id="CHEBI:57692"/>
    </ligand>
</feature>
<feature type="binding site" evidence="1">
    <location>
        <position position="41"/>
    </location>
    <ligand>
        <name>FAD</name>
        <dbReference type="ChEBI" id="CHEBI:57692"/>
    </ligand>
</feature>
<feature type="binding site" evidence="1">
    <location>
        <position position="46"/>
    </location>
    <ligand>
        <name>FAD</name>
        <dbReference type="ChEBI" id="CHEBI:57692"/>
    </ligand>
</feature>
<feature type="binding site" evidence="1">
    <location>
        <position position="86"/>
    </location>
    <ligand>
        <name>FAD</name>
        <dbReference type="ChEBI" id="CHEBI:57692"/>
    </ligand>
</feature>
<feature type="binding site" evidence="1">
    <location>
        <position position="121"/>
    </location>
    <ligand>
        <name>FAD</name>
        <dbReference type="ChEBI" id="CHEBI:57692"/>
    </ligand>
</feature>
<feature type="binding site" evidence="1">
    <location>
        <position position="282"/>
    </location>
    <ligand>
        <name>FAD</name>
        <dbReference type="ChEBI" id="CHEBI:57692"/>
    </ligand>
</feature>
<feature type="binding site" evidence="1">
    <location>
        <position position="325"/>
    </location>
    <ligand>
        <name>FAD</name>
        <dbReference type="ChEBI" id="CHEBI:57692"/>
    </ligand>
</feature>
<comment type="catalytic activity">
    <reaction evidence="1">
        <text>2 reduced [2Fe-2S]-[ferredoxin] + NADP(+) + H(+) = 2 oxidized [2Fe-2S]-[ferredoxin] + NADPH</text>
        <dbReference type="Rhea" id="RHEA:20125"/>
        <dbReference type="Rhea" id="RHEA-COMP:10000"/>
        <dbReference type="Rhea" id="RHEA-COMP:10001"/>
        <dbReference type="ChEBI" id="CHEBI:15378"/>
        <dbReference type="ChEBI" id="CHEBI:33737"/>
        <dbReference type="ChEBI" id="CHEBI:33738"/>
        <dbReference type="ChEBI" id="CHEBI:57783"/>
        <dbReference type="ChEBI" id="CHEBI:58349"/>
        <dbReference type="EC" id="1.18.1.2"/>
    </reaction>
</comment>
<comment type="cofactor">
    <cofactor evidence="1">
        <name>FAD</name>
        <dbReference type="ChEBI" id="CHEBI:57692"/>
    </cofactor>
    <text evidence="1">Binds 1 FAD per subunit.</text>
</comment>
<comment type="subunit">
    <text evidence="1">Homodimer.</text>
</comment>
<comment type="similarity">
    <text evidence="1">Belongs to the ferredoxin--NADP reductase type 2 family.</text>
</comment>
<comment type="sequence caution" evidence="2">
    <conflict type="erroneous initiation">
        <sequence resource="EMBL-CDS" id="ABP94918"/>
    </conflict>
</comment>